<name>HPRK_XANE5</name>
<evidence type="ECO:0000255" key="1">
    <source>
        <dbReference type="HAMAP-Rule" id="MF_01249"/>
    </source>
</evidence>
<proteinExistence type="inferred from homology"/>
<dbReference type="EC" id="2.7.11.-" evidence="1"/>
<dbReference type="EC" id="2.7.4.-" evidence="1"/>
<dbReference type="EMBL" id="AM039952">
    <property type="protein sequence ID" value="CAJ24852.1"/>
    <property type="molecule type" value="Genomic_DNA"/>
</dbReference>
<dbReference type="RefSeq" id="WP_003487845.1">
    <property type="nucleotide sequence ID" value="NZ_CP017190.1"/>
</dbReference>
<dbReference type="SMR" id="Q3BQW1"/>
<dbReference type="STRING" id="456327.BJD11_07220"/>
<dbReference type="GeneID" id="97511252"/>
<dbReference type="KEGG" id="xcv:XCV3121"/>
<dbReference type="eggNOG" id="COG1493">
    <property type="taxonomic scope" value="Bacteria"/>
</dbReference>
<dbReference type="HOGENOM" id="CLU_052030_0_2_6"/>
<dbReference type="Proteomes" id="UP000007069">
    <property type="component" value="Chromosome"/>
</dbReference>
<dbReference type="GO" id="GO:0005524">
    <property type="term" value="F:ATP binding"/>
    <property type="evidence" value="ECO:0007669"/>
    <property type="project" value="UniProtKB-UniRule"/>
</dbReference>
<dbReference type="GO" id="GO:0000287">
    <property type="term" value="F:magnesium ion binding"/>
    <property type="evidence" value="ECO:0007669"/>
    <property type="project" value="UniProtKB-UniRule"/>
</dbReference>
<dbReference type="GO" id="GO:0000155">
    <property type="term" value="F:phosphorelay sensor kinase activity"/>
    <property type="evidence" value="ECO:0007669"/>
    <property type="project" value="InterPro"/>
</dbReference>
<dbReference type="GO" id="GO:0004674">
    <property type="term" value="F:protein serine/threonine kinase activity"/>
    <property type="evidence" value="ECO:0007669"/>
    <property type="project" value="UniProtKB-KW"/>
</dbReference>
<dbReference type="GO" id="GO:0004712">
    <property type="term" value="F:protein serine/threonine/tyrosine kinase activity"/>
    <property type="evidence" value="ECO:0007669"/>
    <property type="project" value="UniProtKB-UniRule"/>
</dbReference>
<dbReference type="GO" id="GO:0006109">
    <property type="term" value="P:regulation of carbohydrate metabolic process"/>
    <property type="evidence" value="ECO:0007669"/>
    <property type="project" value="UniProtKB-UniRule"/>
</dbReference>
<dbReference type="CDD" id="cd01918">
    <property type="entry name" value="HprK_C"/>
    <property type="match status" value="1"/>
</dbReference>
<dbReference type="FunFam" id="3.40.50.300:FF:000174">
    <property type="entry name" value="HPr kinase/phosphorylase"/>
    <property type="match status" value="1"/>
</dbReference>
<dbReference type="Gene3D" id="3.40.1390.20">
    <property type="entry name" value="HprK N-terminal domain-like"/>
    <property type="match status" value="1"/>
</dbReference>
<dbReference type="Gene3D" id="3.40.50.300">
    <property type="entry name" value="P-loop containing nucleotide triphosphate hydrolases"/>
    <property type="match status" value="1"/>
</dbReference>
<dbReference type="HAMAP" id="MF_01249">
    <property type="entry name" value="HPr_kinase"/>
    <property type="match status" value="1"/>
</dbReference>
<dbReference type="InterPro" id="IPR003755">
    <property type="entry name" value="HPr(Ser)_kin/Pase"/>
</dbReference>
<dbReference type="InterPro" id="IPR011104">
    <property type="entry name" value="Hpr_kin/Pase_C"/>
</dbReference>
<dbReference type="InterPro" id="IPR011126">
    <property type="entry name" value="Hpr_kin/Pase_Hpr_N"/>
</dbReference>
<dbReference type="InterPro" id="IPR027417">
    <property type="entry name" value="P-loop_NTPase"/>
</dbReference>
<dbReference type="InterPro" id="IPR028979">
    <property type="entry name" value="Ser_kin/Pase_Hpr-like_N_sf"/>
</dbReference>
<dbReference type="NCBIfam" id="TIGR00679">
    <property type="entry name" value="hpr-ser"/>
    <property type="match status" value="1"/>
</dbReference>
<dbReference type="PANTHER" id="PTHR30305:SF1">
    <property type="entry name" value="HPR KINASE_PHOSPHORYLASE"/>
    <property type="match status" value="1"/>
</dbReference>
<dbReference type="PANTHER" id="PTHR30305">
    <property type="entry name" value="PROTEIN YJDM-RELATED"/>
    <property type="match status" value="1"/>
</dbReference>
<dbReference type="Pfam" id="PF07475">
    <property type="entry name" value="Hpr_kinase_C"/>
    <property type="match status" value="1"/>
</dbReference>
<dbReference type="Pfam" id="PF02603">
    <property type="entry name" value="Hpr_kinase_N"/>
    <property type="match status" value="1"/>
</dbReference>
<dbReference type="SUPFAM" id="SSF75138">
    <property type="entry name" value="HprK N-terminal domain-like"/>
    <property type="match status" value="1"/>
</dbReference>
<dbReference type="SUPFAM" id="SSF53795">
    <property type="entry name" value="PEP carboxykinase-like"/>
    <property type="match status" value="1"/>
</dbReference>
<feature type="chain" id="PRO_1000067182" description="HPr kinase/phosphorylase">
    <location>
        <begin position="1"/>
        <end position="316"/>
    </location>
</feature>
<feature type="region of interest" description="Important for the catalytic mechanism of both phosphorylation and dephosphorylation" evidence="1">
    <location>
        <begin position="206"/>
        <end position="215"/>
    </location>
</feature>
<feature type="region of interest" description="Important for the catalytic mechanism of dephosphorylation" evidence="1">
    <location>
        <begin position="272"/>
        <end position="277"/>
    </location>
</feature>
<feature type="active site" evidence="1">
    <location>
        <position position="143"/>
    </location>
</feature>
<feature type="active site" evidence="1">
    <location>
        <position position="164"/>
    </location>
</feature>
<feature type="active site" description="Proton acceptor; for phosphorylation activity. Proton donor; for dephosphorylation activity" evidence="1">
    <location>
        <position position="182"/>
    </location>
</feature>
<feature type="active site" evidence="1">
    <location>
        <position position="251"/>
    </location>
</feature>
<feature type="binding site" evidence="1">
    <location>
        <begin position="158"/>
        <end position="165"/>
    </location>
    <ligand>
        <name>ATP</name>
        <dbReference type="ChEBI" id="CHEBI:30616"/>
    </ligand>
</feature>
<feature type="binding site" evidence="1">
    <location>
        <position position="165"/>
    </location>
    <ligand>
        <name>Mg(2+)</name>
        <dbReference type="ChEBI" id="CHEBI:18420"/>
    </ligand>
</feature>
<feature type="binding site" evidence="1">
    <location>
        <position position="207"/>
    </location>
    <ligand>
        <name>Mg(2+)</name>
        <dbReference type="ChEBI" id="CHEBI:18420"/>
    </ligand>
</feature>
<comment type="function">
    <text evidence="1">Catalyzes the ATP- as well as the pyrophosphate-dependent phosphorylation of a specific serine residue in HPr, a phosphocarrier protein of the phosphoenolpyruvate-dependent sugar phosphotransferase system (PTS). HprK/P also catalyzes the pyrophosphate-producing, inorganic phosphate-dependent dephosphorylation (phosphorolysis) of seryl-phosphorylated HPr (P-Ser-HPr).</text>
</comment>
<comment type="catalytic activity">
    <reaction evidence="1">
        <text>[HPr protein]-L-serine + ATP = [HPr protein]-O-phospho-L-serine + ADP + H(+)</text>
        <dbReference type="Rhea" id="RHEA:46600"/>
        <dbReference type="Rhea" id="RHEA-COMP:11602"/>
        <dbReference type="Rhea" id="RHEA-COMP:11603"/>
        <dbReference type="ChEBI" id="CHEBI:15378"/>
        <dbReference type="ChEBI" id="CHEBI:29999"/>
        <dbReference type="ChEBI" id="CHEBI:30616"/>
        <dbReference type="ChEBI" id="CHEBI:83421"/>
        <dbReference type="ChEBI" id="CHEBI:456216"/>
    </reaction>
</comment>
<comment type="catalytic activity">
    <reaction evidence="1">
        <text>[HPr protein]-O-phospho-L-serine + phosphate + H(+) = [HPr protein]-L-serine + diphosphate</text>
        <dbReference type="Rhea" id="RHEA:46604"/>
        <dbReference type="Rhea" id="RHEA-COMP:11602"/>
        <dbReference type="Rhea" id="RHEA-COMP:11603"/>
        <dbReference type="ChEBI" id="CHEBI:15378"/>
        <dbReference type="ChEBI" id="CHEBI:29999"/>
        <dbReference type="ChEBI" id="CHEBI:33019"/>
        <dbReference type="ChEBI" id="CHEBI:43474"/>
        <dbReference type="ChEBI" id="CHEBI:83421"/>
    </reaction>
</comment>
<comment type="cofactor">
    <cofactor evidence="1">
        <name>Mg(2+)</name>
        <dbReference type="ChEBI" id="CHEBI:18420"/>
    </cofactor>
</comment>
<comment type="subunit">
    <text evidence="1">Homohexamer.</text>
</comment>
<comment type="domain">
    <text evidence="1">The Walker A ATP-binding motif also binds Pi and PPi.</text>
</comment>
<comment type="miscellaneous">
    <text evidence="1">Both phosphorylation and phosphorolysis are carried out by the same active site and suggest a common mechanism for both reactions.</text>
</comment>
<comment type="similarity">
    <text evidence="1">Belongs to the HPrK/P family.</text>
</comment>
<reference key="1">
    <citation type="journal article" date="2005" name="J. Bacteriol.">
        <title>Insights into genome plasticity and pathogenicity of the plant pathogenic Bacterium Xanthomonas campestris pv. vesicatoria revealed by the complete genome sequence.</title>
        <authorList>
            <person name="Thieme F."/>
            <person name="Koebnik R."/>
            <person name="Bekel T."/>
            <person name="Berger C."/>
            <person name="Boch J."/>
            <person name="Buettner D."/>
            <person name="Caldana C."/>
            <person name="Gaigalat L."/>
            <person name="Goesmann A."/>
            <person name="Kay S."/>
            <person name="Kirchner O."/>
            <person name="Lanz C."/>
            <person name="Linke B."/>
            <person name="McHardy A.C."/>
            <person name="Meyer F."/>
            <person name="Mittenhuber G."/>
            <person name="Nies D.H."/>
            <person name="Niesbach-Kloesgen U."/>
            <person name="Patschkowski T."/>
            <person name="Rueckert C."/>
            <person name="Rupp O."/>
            <person name="Schneiker S."/>
            <person name="Schuster S.C."/>
            <person name="Vorhoelter F.J."/>
            <person name="Weber E."/>
            <person name="Puehler A."/>
            <person name="Bonas U."/>
            <person name="Bartels D."/>
            <person name="Kaiser O."/>
        </authorList>
    </citation>
    <scope>NUCLEOTIDE SEQUENCE [LARGE SCALE GENOMIC DNA]</scope>
    <source>
        <strain>85-10</strain>
    </source>
</reference>
<organism>
    <name type="scientific">Xanthomonas euvesicatoria pv. vesicatoria (strain 85-10)</name>
    <name type="common">Xanthomonas campestris pv. vesicatoria</name>
    <dbReference type="NCBI Taxonomy" id="316273"/>
    <lineage>
        <taxon>Bacteria</taxon>
        <taxon>Pseudomonadati</taxon>
        <taxon>Pseudomonadota</taxon>
        <taxon>Gammaproteobacteria</taxon>
        <taxon>Lysobacterales</taxon>
        <taxon>Lysobacteraceae</taxon>
        <taxon>Xanthomonas</taxon>
    </lineage>
</organism>
<gene>
    <name evidence="1" type="primary">hprK</name>
    <name type="ordered locus">XCV3121</name>
</gene>
<accession>Q3BQW1</accession>
<sequence length="316" mass="35113">MNTSITARELFDQQRDKLALRWVAGPKGEHREIQAGSNNARRPSLAGYLNVIYPNKVQILGTEELAWLDSLDARQRWETIEKIIQVQPLALAISKNQSCPEDLRAAADESNTPLWISSKRGHELLNHLSYHLARTLAPRVTLHGVFMEIYSIGVLITGEAGSGKSELALELLSRGHRLVADDAPEFTQIAPDVLDGTCPELLQDLLEVRGLGVLNVRDMFGDTAVKKNKYLRLIVHLTRPMTEPTPSGYERLTGDSGSRHVLDLDVPLITLPVMPGRNLAVLTEAATRLHILRTKGIDPAAMFIARHSNLLERRTP</sequence>
<protein>
    <recommendedName>
        <fullName evidence="1">HPr kinase/phosphorylase</fullName>
        <shortName evidence="1">HPrK/P</shortName>
        <ecNumber evidence="1">2.7.11.-</ecNumber>
        <ecNumber evidence="1">2.7.4.-</ecNumber>
    </recommendedName>
    <alternativeName>
        <fullName evidence="1">HPr(Ser) kinase/phosphorylase</fullName>
    </alternativeName>
</protein>
<keyword id="KW-0067">ATP-binding</keyword>
<keyword id="KW-0418">Kinase</keyword>
<keyword id="KW-0460">Magnesium</keyword>
<keyword id="KW-0479">Metal-binding</keyword>
<keyword id="KW-0511">Multifunctional enzyme</keyword>
<keyword id="KW-0547">Nucleotide-binding</keyword>
<keyword id="KW-0723">Serine/threonine-protein kinase</keyword>
<keyword id="KW-0808">Transferase</keyword>